<sequence length="236" mass="27776">MNELKDFFFLGKPIQTEIGEIDFIRLKDYPLYTKELSMLRMNKKSLIKEYSRFNEDGSLDPFIIEMKKRDLYEIVHSVLPDFHEAYFKVFSKVLINKDSLSLIGKHNFPRLRKLILDMHCITEDKVVDNDELQEFHDISKSLKQQDSQSDLKDIVSCVAAFNGYTYEEISEMTMYQLYLSFYRMAEVMNYNTTTLFATVSPDVKVSDWSSHINLYKEESYHLSTKDAKNIEQLFGG</sequence>
<name>YOMV_BACSU</name>
<feature type="chain" id="PRO_0000360600" description="SPbeta prophage-derived uncharacterized protein YomV">
    <location>
        <begin position="1"/>
        <end position="236"/>
    </location>
</feature>
<gene>
    <name type="primary">yomV</name>
    <name type="ordered locus">BSU21210</name>
</gene>
<proteinExistence type="predicted"/>
<protein>
    <recommendedName>
        <fullName>SPbeta prophage-derived uncharacterized protein YomV</fullName>
    </recommendedName>
</protein>
<organism>
    <name type="scientific">Bacillus subtilis (strain 168)</name>
    <dbReference type="NCBI Taxonomy" id="224308"/>
    <lineage>
        <taxon>Bacteria</taxon>
        <taxon>Bacillati</taxon>
        <taxon>Bacillota</taxon>
        <taxon>Bacilli</taxon>
        <taxon>Bacillales</taxon>
        <taxon>Bacillaceae</taxon>
        <taxon>Bacillus</taxon>
    </lineage>
</organism>
<accession>O31962</accession>
<reference key="1">
    <citation type="journal article" date="1997" name="Nature">
        <title>The complete genome sequence of the Gram-positive bacterium Bacillus subtilis.</title>
        <authorList>
            <person name="Kunst F."/>
            <person name="Ogasawara N."/>
            <person name="Moszer I."/>
            <person name="Albertini A.M."/>
            <person name="Alloni G."/>
            <person name="Azevedo V."/>
            <person name="Bertero M.G."/>
            <person name="Bessieres P."/>
            <person name="Bolotin A."/>
            <person name="Borchert S."/>
            <person name="Borriss R."/>
            <person name="Boursier L."/>
            <person name="Brans A."/>
            <person name="Braun M."/>
            <person name="Brignell S.C."/>
            <person name="Bron S."/>
            <person name="Brouillet S."/>
            <person name="Bruschi C.V."/>
            <person name="Caldwell B."/>
            <person name="Capuano V."/>
            <person name="Carter N.M."/>
            <person name="Choi S.-K."/>
            <person name="Codani J.-J."/>
            <person name="Connerton I.F."/>
            <person name="Cummings N.J."/>
            <person name="Daniel R.A."/>
            <person name="Denizot F."/>
            <person name="Devine K.M."/>
            <person name="Duesterhoeft A."/>
            <person name="Ehrlich S.D."/>
            <person name="Emmerson P.T."/>
            <person name="Entian K.-D."/>
            <person name="Errington J."/>
            <person name="Fabret C."/>
            <person name="Ferrari E."/>
            <person name="Foulger D."/>
            <person name="Fritz C."/>
            <person name="Fujita M."/>
            <person name="Fujita Y."/>
            <person name="Fuma S."/>
            <person name="Galizzi A."/>
            <person name="Galleron N."/>
            <person name="Ghim S.-Y."/>
            <person name="Glaser P."/>
            <person name="Goffeau A."/>
            <person name="Golightly E.J."/>
            <person name="Grandi G."/>
            <person name="Guiseppi G."/>
            <person name="Guy B.J."/>
            <person name="Haga K."/>
            <person name="Haiech J."/>
            <person name="Harwood C.R."/>
            <person name="Henaut A."/>
            <person name="Hilbert H."/>
            <person name="Holsappel S."/>
            <person name="Hosono S."/>
            <person name="Hullo M.-F."/>
            <person name="Itaya M."/>
            <person name="Jones L.-M."/>
            <person name="Joris B."/>
            <person name="Karamata D."/>
            <person name="Kasahara Y."/>
            <person name="Klaerr-Blanchard M."/>
            <person name="Klein C."/>
            <person name="Kobayashi Y."/>
            <person name="Koetter P."/>
            <person name="Koningstein G."/>
            <person name="Krogh S."/>
            <person name="Kumano M."/>
            <person name="Kurita K."/>
            <person name="Lapidus A."/>
            <person name="Lardinois S."/>
            <person name="Lauber J."/>
            <person name="Lazarevic V."/>
            <person name="Lee S.-M."/>
            <person name="Levine A."/>
            <person name="Liu H."/>
            <person name="Masuda S."/>
            <person name="Mauel C."/>
            <person name="Medigue C."/>
            <person name="Medina N."/>
            <person name="Mellado R.P."/>
            <person name="Mizuno M."/>
            <person name="Moestl D."/>
            <person name="Nakai S."/>
            <person name="Noback M."/>
            <person name="Noone D."/>
            <person name="O'Reilly M."/>
            <person name="Ogawa K."/>
            <person name="Ogiwara A."/>
            <person name="Oudega B."/>
            <person name="Park S.-H."/>
            <person name="Parro V."/>
            <person name="Pohl T.M."/>
            <person name="Portetelle D."/>
            <person name="Porwollik S."/>
            <person name="Prescott A.M."/>
            <person name="Presecan E."/>
            <person name="Pujic P."/>
            <person name="Purnelle B."/>
            <person name="Rapoport G."/>
            <person name="Rey M."/>
            <person name="Reynolds S."/>
            <person name="Rieger M."/>
            <person name="Rivolta C."/>
            <person name="Rocha E."/>
            <person name="Roche B."/>
            <person name="Rose M."/>
            <person name="Sadaie Y."/>
            <person name="Sato T."/>
            <person name="Scanlan E."/>
            <person name="Schleich S."/>
            <person name="Schroeter R."/>
            <person name="Scoffone F."/>
            <person name="Sekiguchi J."/>
            <person name="Sekowska A."/>
            <person name="Seror S.J."/>
            <person name="Serror P."/>
            <person name="Shin B.-S."/>
            <person name="Soldo B."/>
            <person name="Sorokin A."/>
            <person name="Tacconi E."/>
            <person name="Takagi T."/>
            <person name="Takahashi H."/>
            <person name="Takemaru K."/>
            <person name="Takeuchi M."/>
            <person name="Tamakoshi A."/>
            <person name="Tanaka T."/>
            <person name="Terpstra P."/>
            <person name="Tognoni A."/>
            <person name="Tosato V."/>
            <person name="Uchiyama S."/>
            <person name="Vandenbol M."/>
            <person name="Vannier F."/>
            <person name="Vassarotti A."/>
            <person name="Viari A."/>
            <person name="Wambutt R."/>
            <person name="Wedler E."/>
            <person name="Wedler H."/>
            <person name="Weitzenegger T."/>
            <person name="Winters P."/>
            <person name="Wipat A."/>
            <person name="Yamamoto H."/>
            <person name="Yamane K."/>
            <person name="Yasumoto K."/>
            <person name="Yata K."/>
            <person name="Yoshida K."/>
            <person name="Yoshikawa H.-F."/>
            <person name="Zumstein E."/>
            <person name="Yoshikawa H."/>
            <person name="Danchin A."/>
        </authorList>
    </citation>
    <scope>NUCLEOTIDE SEQUENCE [LARGE SCALE GENOMIC DNA]</scope>
    <source>
        <strain>168</strain>
    </source>
</reference>
<dbReference type="EMBL" id="AL009126">
    <property type="protein sequence ID" value="CAB14039.1"/>
    <property type="molecule type" value="Genomic_DNA"/>
</dbReference>
<dbReference type="RefSeq" id="NP_390004.1">
    <property type="nucleotide sequence ID" value="NC_000964.3"/>
</dbReference>
<dbReference type="RefSeq" id="WP_003230954.1">
    <property type="nucleotide sequence ID" value="NZ_OZ025638.1"/>
</dbReference>
<dbReference type="FunCoup" id="O31962">
    <property type="interactions" value="55"/>
</dbReference>
<dbReference type="STRING" id="224308.BSU21210"/>
<dbReference type="PaxDb" id="224308-BSU21210"/>
<dbReference type="EnsemblBacteria" id="CAB14039">
    <property type="protein sequence ID" value="CAB14039"/>
    <property type="gene ID" value="BSU_21210"/>
</dbReference>
<dbReference type="GeneID" id="939149"/>
<dbReference type="KEGG" id="bsu:BSU21210"/>
<dbReference type="PATRIC" id="fig|224308.179.peg.2315"/>
<dbReference type="eggNOG" id="ENOG502ZHZT">
    <property type="taxonomic scope" value="Bacteria"/>
</dbReference>
<dbReference type="InParanoid" id="O31962"/>
<dbReference type="OrthoDB" id="2899017at2"/>
<dbReference type="BioCyc" id="BSUB:BSU21210-MONOMER"/>
<dbReference type="Proteomes" id="UP000001570">
    <property type="component" value="Chromosome"/>
</dbReference>
<keyword id="KW-1185">Reference proteome</keyword>